<comment type="function">
    <text evidence="1">The key enzymatic reactions in nitrogen fixation are catalyzed by the nitrogenase complex, which has 2 components: the iron protein and the molybdenum-iron protein.</text>
</comment>
<comment type="catalytic activity">
    <reaction>
        <text>N2 + 8 reduced [2Fe-2S]-[ferredoxin] + 16 ATP + 16 H2O = H2 + 8 oxidized [2Fe-2S]-[ferredoxin] + 2 NH4(+) + 16 ADP + 16 phosphate + 6 H(+)</text>
        <dbReference type="Rhea" id="RHEA:21448"/>
        <dbReference type="Rhea" id="RHEA-COMP:10000"/>
        <dbReference type="Rhea" id="RHEA-COMP:10001"/>
        <dbReference type="ChEBI" id="CHEBI:15377"/>
        <dbReference type="ChEBI" id="CHEBI:15378"/>
        <dbReference type="ChEBI" id="CHEBI:17997"/>
        <dbReference type="ChEBI" id="CHEBI:18276"/>
        <dbReference type="ChEBI" id="CHEBI:28938"/>
        <dbReference type="ChEBI" id="CHEBI:30616"/>
        <dbReference type="ChEBI" id="CHEBI:33737"/>
        <dbReference type="ChEBI" id="CHEBI:33738"/>
        <dbReference type="ChEBI" id="CHEBI:43474"/>
        <dbReference type="ChEBI" id="CHEBI:456216"/>
        <dbReference type="EC" id="1.18.6.1"/>
    </reaction>
</comment>
<comment type="cofactor">
    <cofactor evidence="1">
        <name>[4Fe-4S] cluster</name>
        <dbReference type="ChEBI" id="CHEBI:49883"/>
    </cofactor>
    <text evidence="1">Binds 1 [4Fe-4S] cluster per dimer.</text>
</comment>
<comment type="subunit">
    <text evidence="1">Homodimer.</text>
</comment>
<comment type="PTM">
    <text evidence="1">The reversible ADP-ribosylation of Arg-100 inactivates the nitrogenase reductase and regulates nitrogenase activity.</text>
</comment>
<comment type="similarity">
    <text evidence="3">Belongs to the NifH/BchL/ChlL family.</text>
</comment>
<dbReference type="EC" id="1.18.6.1"/>
<dbReference type="EMBL" id="X07474">
    <property type="protein sequence ID" value="CAA30361.1"/>
    <property type="molecule type" value="Genomic_DNA"/>
</dbReference>
<dbReference type="PIR" id="S01723">
    <property type="entry name" value="S01723"/>
</dbReference>
<dbReference type="SMR" id="P09553"/>
<dbReference type="OrthoDB" id="9778641at2"/>
<dbReference type="GO" id="GO:0051539">
    <property type="term" value="F:4 iron, 4 sulfur cluster binding"/>
    <property type="evidence" value="ECO:0007669"/>
    <property type="project" value="UniProtKB-KW"/>
</dbReference>
<dbReference type="GO" id="GO:0005524">
    <property type="term" value="F:ATP binding"/>
    <property type="evidence" value="ECO:0007669"/>
    <property type="project" value="UniProtKB-UniRule"/>
</dbReference>
<dbReference type="GO" id="GO:0046872">
    <property type="term" value="F:metal ion binding"/>
    <property type="evidence" value="ECO:0007669"/>
    <property type="project" value="UniProtKB-KW"/>
</dbReference>
<dbReference type="GO" id="GO:0016163">
    <property type="term" value="F:nitrogenase activity"/>
    <property type="evidence" value="ECO:0007669"/>
    <property type="project" value="UniProtKB-UniRule"/>
</dbReference>
<dbReference type="GO" id="GO:0009399">
    <property type="term" value="P:nitrogen fixation"/>
    <property type="evidence" value="ECO:0007669"/>
    <property type="project" value="UniProtKB-UniRule"/>
</dbReference>
<dbReference type="CDD" id="cd02040">
    <property type="entry name" value="NifH"/>
    <property type="match status" value="1"/>
</dbReference>
<dbReference type="Gene3D" id="3.40.50.300">
    <property type="entry name" value="P-loop containing nucleotide triphosphate hydrolases"/>
    <property type="match status" value="1"/>
</dbReference>
<dbReference type="HAMAP" id="MF_00533">
    <property type="entry name" value="NifH"/>
    <property type="match status" value="1"/>
</dbReference>
<dbReference type="InterPro" id="IPR030655">
    <property type="entry name" value="NifH/chlL_CS"/>
</dbReference>
<dbReference type="InterPro" id="IPR000392">
    <property type="entry name" value="NifH/frxC"/>
</dbReference>
<dbReference type="InterPro" id="IPR005977">
    <property type="entry name" value="Nitrogenase_Fe_NifH"/>
</dbReference>
<dbReference type="InterPro" id="IPR027417">
    <property type="entry name" value="P-loop_NTPase"/>
</dbReference>
<dbReference type="NCBIfam" id="TIGR01287">
    <property type="entry name" value="nifH"/>
    <property type="match status" value="1"/>
</dbReference>
<dbReference type="PANTHER" id="PTHR42864">
    <property type="entry name" value="LIGHT-INDEPENDENT PROTOCHLOROPHYLLIDE REDUCTASE IRON-SULFUR ATP-BINDING PROTEIN"/>
    <property type="match status" value="1"/>
</dbReference>
<dbReference type="PANTHER" id="PTHR42864:SF2">
    <property type="entry name" value="LIGHT-INDEPENDENT PROTOCHLOROPHYLLIDE REDUCTASE IRON-SULFUR ATP-BINDING PROTEIN"/>
    <property type="match status" value="1"/>
</dbReference>
<dbReference type="Pfam" id="PF00142">
    <property type="entry name" value="Fer4_NifH"/>
    <property type="match status" value="1"/>
</dbReference>
<dbReference type="PIRSF" id="PIRSF000363">
    <property type="entry name" value="Nitrogenase_iron"/>
    <property type="match status" value="1"/>
</dbReference>
<dbReference type="PRINTS" id="PR00091">
    <property type="entry name" value="NITROGNASEII"/>
</dbReference>
<dbReference type="SUPFAM" id="SSF52540">
    <property type="entry name" value="P-loop containing nucleoside triphosphate hydrolases"/>
    <property type="match status" value="1"/>
</dbReference>
<dbReference type="PROSITE" id="PS00746">
    <property type="entry name" value="NIFH_FRXC_1"/>
    <property type="match status" value="1"/>
</dbReference>
<dbReference type="PROSITE" id="PS00692">
    <property type="entry name" value="NIFH_FRXC_2"/>
    <property type="match status" value="1"/>
</dbReference>
<dbReference type="PROSITE" id="PS51026">
    <property type="entry name" value="NIFH_FRXC_3"/>
    <property type="match status" value="1"/>
</dbReference>
<accession>P09553</accession>
<keyword id="KW-0004">4Fe-4S</keyword>
<keyword id="KW-0013">ADP-ribosylation</keyword>
<keyword id="KW-0067">ATP-binding</keyword>
<keyword id="KW-0408">Iron</keyword>
<keyword id="KW-0411">Iron-sulfur</keyword>
<keyword id="KW-0479">Metal-binding</keyword>
<keyword id="KW-0535">Nitrogen fixation</keyword>
<keyword id="KW-0547">Nucleotide-binding</keyword>
<keyword id="KW-0560">Oxidoreductase</keyword>
<gene>
    <name type="primary">nifH3</name>
</gene>
<organism>
    <name type="scientific">Clostridium pasteurianum</name>
    <dbReference type="NCBI Taxonomy" id="1501"/>
    <lineage>
        <taxon>Bacteria</taxon>
        <taxon>Bacillati</taxon>
        <taxon>Bacillota</taxon>
        <taxon>Clostridia</taxon>
        <taxon>Eubacteriales</taxon>
        <taxon>Clostridiaceae</taxon>
        <taxon>Clostridium</taxon>
    </lineage>
</organism>
<reference key="1">
    <citation type="journal article" date="1988" name="Nucleic Acids Res.">
        <title>The presence of five nifH-like sequences in Clostridium pasteurianum: sequence divergence and transcription properties.</title>
        <authorList>
            <person name="Wang S.-Z."/>
            <person name="Chen J.-S."/>
            <person name="Johnson J.L."/>
        </authorList>
    </citation>
    <scope>NUCLEOTIDE SEQUENCE [GENOMIC DNA]</scope>
</reference>
<feature type="chain" id="PRO_0000139500" description="Nitrogenase iron protein 3">
    <location>
        <begin position="1"/>
        <end position="275"/>
    </location>
</feature>
<feature type="binding site" evidence="2">
    <location>
        <begin position="9"/>
        <end position="16"/>
    </location>
    <ligand>
        <name>ATP</name>
        <dbReference type="ChEBI" id="CHEBI:30616"/>
    </ligand>
</feature>
<feature type="binding site" evidence="1">
    <location>
        <position position="97"/>
    </location>
    <ligand>
        <name>[4Fe-4S] cluster</name>
        <dbReference type="ChEBI" id="CHEBI:49883"/>
        <note>ligand shared between dimeric partners</note>
    </ligand>
</feature>
<feature type="binding site" evidence="1">
    <location>
        <position position="132"/>
    </location>
    <ligand>
        <name>[4Fe-4S] cluster</name>
        <dbReference type="ChEBI" id="CHEBI:49883"/>
        <note>ligand shared between dimeric partners</note>
    </ligand>
</feature>
<feature type="modified residue" description="ADP-ribosylarginine; by dinitrogenase reductase ADP-ribosyltransferase" evidence="1">
    <location>
        <position position="100"/>
    </location>
</feature>
<name>NIFH3_CLOPA</name>
<sequence>MTRKIAIYGKGGIGKSTTQQNTAAAMAHFYDKKVFIHGCDPKADSTRLILGGMPQKTLMDMLRDEGEEKITTENIVRVGYEDIRCVESGGPEPGVGCAGRGVITAIDLMEKNGAYTEDLDFVFFDVLGDVVCGGFAMPIRDGKAQEVYIVASGEMMAVYAANNICKGLVKYANQSGVRLGGIICNSRMVDLEREFIEEFAASIGTQMIHFMPRDNIVQKAEFNKQTVIEFDDTCNQAKEYGELARKIIENEMFVIPTPLKMDDLEAMVVKYGMTD</sequence>
<evidence type="ECO:0000250" key="1"/>
<evidence type="ECO:0000255" key="2"/>
<evidence type="ECO:0000305" key="3"/>
<proteinExistence type="inferred from homology"/>
<protein>
    <recommendedName>
        <fullName>Nitrogenase iron protein 3</fullName>
        <ecNumber>1.18.6.1</ecNumber>
    </recommendedName>
    <alternativeName>
        <fullName>Nitrogenase Fe protein 3</fullName>
    </alternativeName>
    <alternativeName>
        <fullName>Nitrogenase component II</fullName>
    </alternativeName>
    <alternativeName>
        <fullName>Nitrogenase reductase</fullName>
    </alternativeName>
</protein>